<proteinExistence type="inferred from homology"/>
<dbReference type="EMBL" id="AF533542">
    <property type="protein sequence ID" value="AAM97357.1"/>
    <property type="molecule type" value="Genomic_DNA"/>
</dbReference>
<dbReference type="EMBL" id="AF533768">
    <property type="protein sequence ID" value="AAP41490.1"/>
    <property type="molecule type" value="Genomic_DNA"/>
</dbReference>
<dbReference type="EMBL" id="AB074432">
    <property type="protein sequence ID" value="BAB83760.1"/>
    <property type="molecule type" value="Genomic_DNA"/>
</dbReference>
<dbReference type="RefSeq" id="NP_851932.1">
    <property type="nucleotide sequence ID" value="NC_004812.1"/>
</dbReference>
<dbReference type="SMR" id="Q8JP02"/>
<dbReference type="GeneID" id="1487466"/>
<dbReference type="KEGG" id="vg:1487466"/>
<dbReference type="Proteomes" id="UP000110594">
    <property type="component" value="Segment"/>
</dbReference>
<dbReference type="GO" id="GO:0030430">
    <property type="term" value="C:host cell cytoplasm"/>
    <property type="evidence" value="ECO:0007669"/>
    <property type="project" value="UniProtKB-SubCell"/>
</dbReference>
<dbReference type="GO" id="GO:0042025">
    <property type="term" value="C:host cell nucleus"/>
    <property type="evidence" value="ECO:0007669"/>
    <property type="project" value="UniProtKB-SubCell"/>
</dbReference>
<dbReference type="GO" id="GO:0039588">
    <property type="term" value="P:symbiont-mediated suppression of host antigen processing and presentation"/>
    <property type="evidence" value="ECO:0007669"/>
    <property type="project" value="UniProtKB-KW"/>
</dbReference>
<dbReference type="InterPro" id="IPR008026">
    <property type="entry name" value="Herpes_ICP47"/>
</dbReference>
<dbReference type="Pfam" id="PF05363">
    <property type="entry name" value="Herpes_US12"/>
    <property type="match status" value="1"/>
</dbReference>
<gene>
    <name type="primary">US12</name>
</gene>
<organism>
    <name type="scientific">Cercopithecine herpesvirus 1 (strain E2490)</name>
    <name type="common">CeHV-1</name>
    <name type="synonym">Simian herpes B virus</name>
    <dbReference type="NCBI Taxonomy" id="260965"/>
    <lineage>
        <taxon>Viruses</taxon>
        <taxon>Duplodnaviria</taxon>
        <taxon>Heunggongvirae</taxon>
        <taxon>Peploviricota</taxon>
        <taxon>Herviviricetes</taxon>
        <taxon>Herpesvirales</taxon>
        <taxon>Orthoherpesviridae</taxon>
        <taxon>Alphaherpesvirinae</taxon>
        <taxon>Simplexvirus</taxon>
        <taxon>Simplexvirus macacinealpha1</taxon>
        <taxon>Cercopithecine herpesvirus 1</taxon>
    </lineage>
</organism>
<sequence>MSSRYLAAVDDYLHHPSPRYQAHVDLRRELRAYADEERREAARAIAHPERPLLPPPATQAAPPQPSTREAAHPSAPTAASS</sequence>
<protein>
    <recommendedName>
        <fullName>ICP47 protein</fullName>
    </recommendedName>
    <alternativeName>
        <fullName>Immediate-early protein IE12</fullName>
    </alternativeName>
    <alternativeName>
        <fullName>Immediate-early-5</fullName>
    </alternativeName>
    <alternativeName>
        <fullName>Infected cell protein 47</fullName>
    </alternativeName>
    <alternativeName>
        <fullName>US12 protein</fullName>
    </alternativeName>
    <alternativeName>
        <fullName>Vmw12</fullName>
    </alternativeName>
</protein>
<organismHost>
    <name type="scientific">Macaca fascicularis</name>
    <name type="common">Crab-eating macaque</name>
    <name type="synonym">Cynomolgus monkey</name>
    <dbReference type="NCBI Taxonomy" id="9541"/>
</organismHost>
<organismHost>
    <name type="scientific">Macaca mulatta</name>
    <name type="common">Rhesus macaque</name>
    <dbReference type="NCBI Taxonomy" id="9544"/>
</organismHost>
<organismHost>
    <name type="scientific">Macaca nemestrina</name>
    <name type="common">Pig-tailed macaque</name>
    <dbReference type="NCBI Taxonomy" id="9545"/>
</organismHost>
<reference key="1">
    <citation type="submission" date="2002-07" db="EMBL/GenBank/DDBJ databases">
        <title>Comparison of ICP47 homologs from the primate simplexviruses.</title>
        <authorList>
            <person name="Bigger J.E."/>
            <person name="Martin D.W."/>
        </authorList>
    </citation>
    <scope>NUCLEOTIDE SEQUENCE [GENOMIC DNA]</scope>
</reference>
<reference key="2">
    <citation type="journal article" date="2003" name="J. Virol.">
        <title>Complete sequence and comparative analysis of the genome of herpes B virus (Cercopithecine herpesvirus 1) from a rhesus monkey.</title>
        <authorList>
            <person name="Perelygina L."/>
            <person name="Zhu L."/>
            <person name="Zurkuhlen H."/>
            <person name="Mills R."/>
            <person name="Borodovsky M."/>
            <person name="Hilliard J.K."/>
        </authorList>
    </citation>
    <scope>COMPLETE GENOME</scope>
</reference>
<reference key="3">
    <citation type="journal article" date="2002" name="J. Virol.">
        <title>Sequence and genetic arrangement of the U(S) region of the monkey B virus (cercopithecine herpesvirus 1) genome and comparison with the U(S) regions of other primate herpesviruses.</title>
        <authorList>
            <person name="Ohsawa K."/>
            <person name="Black D.H."/>
            <person name="Sato H."/>
            <person name="Eberle R."/>
        </authorList>
    </citation>
    <scope>NUCLEOTIDE SEQUENCE [GENOMIC DNA] OF 4-81</scope>
</reference>
<feature type="chain" id="PRO_0000115812" description="ICP47 protein">
    <location>
        <begin position="1"/>
        <end position="81"/>
    </location>
</feature>
<feature type="region of interest" description="Active domain" evidence="2">
    <location>
        <begin position="3"/>
        <end position="36"/>
    </location>
</feature>
<feature type="region of interest" description="Disordered" evidence="3">
    <location>
        <begin position="37"/>
        <end position="81"/>
    </location>
</feature>
<feature type="compositionally biased region" description="Basic and acidic residues" evidence="3">
    <location>
        <begin position="37"/>
        <end position="50"/>
    </location>
</feature>
<feature type="compositionally biased region" description="Pro residues" evidence="3">
    <location>
        <begin position="51"/>
        <end position="65"/>
    </location>
</feature>
<feature type="compositionally biased region" description="Low complexity" evidence="3">
    <location>
        <begin position="72"/>
        <end position="81"/>
    </location>
</feature>
<feature type="sequence conflict" description="In Ref. 3; BAB83760." evidence="4" ref="3">
    <original>RYLA</original>
    <variation>GTWS</variation>
    <location>
        <begin position="4"/>
        <end position="7"/>
    </location>
</feature>
<keyword id="KW-0244">Early protein</keyword>
<keyword id="KW-1035">Host cytoplasm</keyword>
<keyword id="KW-1048">Host nucleus</keyword>
<keyword id="KW-0945">Host-virus interaction</keyword>
<keyword id="KW-1080">Inhibition of host adaptive immune response by virus</keyword>
<keyword id="KW-1107">Inhibition of host TAP by virus</keyword>
<keyword id="KW-1185">Reference proteome</keyword>
<keyword id="KW-0899">Viral immunoevasion</keyword>
<evidence type="ECO:0000250" key="1">
    <source>
        <dbReference type="UniProtKB" id="P03170"/>
    </source>
</evidence>
<evidence type="ECO:0000250" key="2">
    <source>
        <dbReference type="UniProtKB" id="P14345"/>
    </source>
</evidence>
<evidence type="ECO:0000256" key="3">
    <source>
        <dbReference type="SAM" id="MobiDB-lite"/>
    </source>
</evidence>
<evidence type="ECO:0000305" key="4"/>
<accession>Q8JP02</accession>
<accession>Q8V717</accession>
<name>ICP47_CHV1E</name>
<comment type="function">
    <text evidence="1">Plays a role in the inhibition of host immune response. Binds specifically to transporters associated with antigen processing (TAP), thereby blocking peptide-binding and translocation by TAP as well as subsequent loading of peptides onto MHC class I molecules. Empty MHC I molecules are retained in the endoplasmic reticulum and ultimately directed to proteasomal degradation. In consequence, infected cells are masked for immune recognition by cytotoxic T-lymphocytes.</text>
</comment>
<comment type="subunit">
    <text evidence="1">Interacts with host TAP1 and TAP2; these interactions inhibit the loading of peptides onto MHC class I molecules.</text>
</comment>
<comment type="subcellular location">
    <subcellularLocation>
        <location evidence="1">Host cytoplasm</location>
    </subcellularLocation>
    <subcellularLocation>
        <location evidence="1">Host nucleus</location>
    </subcellularLocation>
</comment>
<comment type="domain">
    <text evidence="2">The N-terminal active domain blocks peptide binding to and peptide transport by TAP.</text>
</comment>
<comment type="similarity">
    <text evidence="4">Belongs to the herpesviridae US12 family.</text>
</comment>